<proteinExistence type="uncertain"/>
<dbReference type="EC" id="2.7.1.4"/>
<dbReference type="EMBL" id="AC007980">
    <property type="protein sequence ID" value="AAD50037.1"/>
    <property type="status" value="ALT_SEQ"/>
    <property type="molecule type" value="Genomic_DNA"/>
</dbReference>
<dbReference type="EMBL" id="CP002684">
    <property type="protein sequence ID" value="AEE32543.1"/>
    <property type="status" value="ALT_SEQ"/>
    <property type="molecule type" value="Genomic_DNA"/>
</dbReference>
<dbReference type="PIR" id="B96540">
    <property type="entry name" value="B96540"/>
</dbReference>
<dbReference type="RefSeq" id="NP_175456.1">
    <property type="nucleotide sequence ID" value="NM_103922.1"/>
</dbReference>
<dbReference type="SMR" id="Q9SX54"/>
<dbReference type="BioGRID" id="26686">
    <property type="interactions" value="4"/>
</dbReference>
<dbReference type="FunCoup" id="Q9SX54">
    <property type="interactions" value="322"/>
</dbReference>
<dbReference type="STRING" id="3702.Q9SX54"/>
<dbReference type="PeptideAtlas" id="Q9SX54"/>
<dbReference type="GeneID" id="841461"/>
<dbReference type="KEGG" id="ath:AT1G50390"/>
<dbReference type="Araport" id="AT1G50390"/>
<dbReference type="TAIR" id="AT1G50390"/>
<dbReference type="HOGENOM" id="CLU_027634_17_1_1"/>
<dbReference type="InParanoid" id="Q9SX54"/>
<dbReference type="BioCyc" id="ARA:AT1G50390-MONOMER"/>
<dbReference type="UniPathway" id="UPA00152"/>
<dbReference type="Proteomes" id="UP000006548">
    <property type="component" value="Chromosome 1"/>
</dbReference>
<dbReference type="ExpressionAtlas" id="Q9SX54">
    <property type="expression patterns" value="baseline and differential"/>
</dbReference>
<dbReference type="GO" id="GO:0005829">
    <property type="term" value="C:cytosol"/>
    <property type="evidence" value="ECO:0000318"/>
    <property type="project" value="GO_Central"/>
</dbReference>
<dbReference type="GO" id="GO:0005524">
    <property type="term" value="F:ATP binding"/>
    <property type="evidence" value="ECO:0007669"/>
    <property type="project" value="UniProtKB-KW"/>
</dbReference>
<dbReference type="GO" id="GO:0008865">
    <property type="term" value="F:fructokinase activity"/>
    <property type="evidence" value="ECO:0000318"/>
    <property type="project" value="GO_Central"/>
</dbReference>
<dbReference type="GO" id="GO:0006000">
    <property type="term" value="P:fructose metabolic process"/>
    <property type="evidence" value="ECO:0000318"/>
    <property type="project" value="GO_Central"/>
</dbReference>
<dbReference type="GO" id="GO:0019252">
    <property type="term" value="P:starch biosynthetic process"/>
    <property type="evidence" value="ECO:0007669"/>
    <property type="project" value="UniProtKB-UniPathway"/>
</dbReference>
<dbReference type="CDD" id="cd01167">
    <property type="entry name" value="bac_FRK"/>
    <property type="match status" value="1"/>
</dbReference>
<dbReference type="Gene3D" id="3.40.1190.20">
    <property type="match status" value="1"/>
</dbReference>
<dbReference type="InterPro" id="IPR002173">
    <property type="entry name" value="Carboh/pur_kinase_PfkB_CS"/>
</dbReference>
<dbReference type="InterPro" id="IPR050306">
    <property type="entry name" value="PfkB_Carbo_kinase"/>
</dbReference>
<dbReference type="InterPro" id="IPR011611">
    <property type="entry name" value="PfkB_dom"/>
</dbReference>
<dbReference type="InterPro" id="IPR029056">
    <property type="entry name" value="Ribokinase-like"/>
</dbReference>
<dbReference type="PANTHER" id="PTHR43085:SF47">
    <property type="entry name" value="FRUCTOKINASE-2-RELATED"/>
    <property type="match status" value="1"/>
</dbReference>
<dbReference type="PANTHER" id="PTHR43085">
    <property type="entry name" value="HEXOKINASE FAMILY MEMBER"/>
    <property type="match status" value="1"/>
</dbReference>
<dbReference type="Pfam" id="PF00294">
    <property type="entry name" value="PfkB"/>
    <property type="match status" value="1"/>
</dbReference>
<dbReference type="SUPFAM" id="SSF53613">
    <property type="entry name" value="Ribokinase-like"/>
    <property type="match status" value="1"/>
</dbReference>
<dbReference type="PROSITE" id="PS00584">
    <property type="entry name" value="PFKB_KINASES_2"/>
    <property type="match status" value="1"/>
</dbReference>
<gene>
    <name evidence="3" type="ordered locus">At1g50390</name>
    <name evidence="4" type="ORF">F14I3.3</name>
</gene>
<organism>
    <name type="scientific">Arabidopsis thaliana</name>
    <name type="common">Mouse-ear cress</name>
    <dbReference type="NCBI Taxonomy" id="3702"/>
    <lineage>
        <taxon>Eukaryota</taxon>
        <taxon>Viridiplantae</taxon>
        <taxon>Streptophyta</taxon>
        <taxon>Embryophyta</taxon>
        <taxon>Tracheophyta</taxon>
        <taxon>Spermatophyta</taxon>
        <taxon>Magnoliopsida</taxon>
        <taxon>eudicotyledons</taxon>
        <taxon>Gunneridae</taxon>
        <taxon>Pentapetalae</taxon>
        <taxon>rosids</taxon>
        <taxon>malvids</taxon>
        <taxon>Brassicales</taxon>
        <taxon>Brassicaceae</taxon>
        <taxon>Camelineae</taxon>
        <taxon>Arabidopsis</taxon>
    </lineage>
</organism>
<reference key="1">
    <citation type="journal article" date="2000" name="Nature">
        <title>Sequence and analysis of chromosome 1 of the plant Arabidopsis thaliana.</title>
        <authorList>
            <person name="Theologis A."/>
            <person name="Ecker J.R."/>
            <person name="Palm C.J."/>
            <person name="Federspiel N.A."/>
            <person name="Kaul S."/>
            <person name="White O."/>
            <person name="Alonso J."/>
            <person name="Altafi H."/>
            <person name="Araujo R."/>
            <person name="Bowman C.L."/>
            <person name="Brooks S.Y."/>
            <person name="Buehler E."/>
            <person name="Chan A."/>
            <person name="Chao Q."/>
            <person name="Chen H."/>
            <person name="Cheuk R.F."/>
            <person name="Chin C.W."/>
            <person name="Chung M.K."/>
            <person name="Conn L."/>
            <person name="Conway A.B."/>
            <person name="Conway A.R."/>
            <person name="Creasy T.H."/>
            <person name="Dewar K."/>
            <person name="Dunn P."/>
            <person name="Etgu P."/>
            <person name="Feldblyum T.V."/>
            <person name="Feng J.-D."/>
            <person name="Fong B."/>
            <person name="Fujii C.Y."/>
            <person name="Gill J.E."/>
            <person name="Goldsmith A.D."/>
            <person name="Haas B."/>
            <person name="Hansen N.F."/>
            <person name="Hughes B."/>
            <person name="Huizar L."/>
            <person name="Hunter J.L."/>
            <person name="Jenkins J."/>
            <person name="Johnson-Hopson C."/>
            <person name="Khan S."/>
            <person name="Khaykin E."/>
            <person name="Kim C.J."/>
            <person name="Koo H.L."/>
            <person name="Kremenetskaia I."/>
            <person name="Kurtz D.B."/>
            <person name="Kwan A."/>
            <person name="Lam B."/>
            <person name="Langin-Hooper S."/>
            <person name="Lee A."/>
            <person name="Lee J.M."/>
            <person name="Lenz C.A."/>
            <person name="Li J.H."/>
            <person name="Li Y.-P."/>
            <person name="Lin X."/>
            <person name="Liu S.X."/>
            <person name="Liu Z.A."/>
            <person name="Luros J.S."/>
            <person name="Maiti R."/>
            <person name="Marziali A."/>
            <person name="Militscher J."/>
            <person name="Miranda M."/>
            <person name="Nguyen M."/>
            <person name="Nierman W.C."/>
            <person name="Osborne B.I."/>
            <person name="Pai G."/>
            <person name="Peterson J."/>
            <person name="Pham P.K."/>
            <person name="Rizzo M."/>
            <person name="Rooney T."/>
            <person name="Rowley D."/>
            <person name="Sakano H."/>
            <person name="Salzberg S.L."/>
            <person name="Schwartz J.R."/>
            <person name="Shinn P."/>
            <person name="Southwick A.M."/>
            <person name="Sun H."/>
            <person name="Tallon L.J."/>
            <person name="Tambunga G."/>
            <person name="Toriumi M.J."/>
            <person name="Town C.D."/>
            <person name="Utterback T."/>
            <person name="Van Aken S."/>
            <person name="Vaysberg M."/>
            <person name="Vysotskaia V.S."/>
            <person name="Walker M."/>
            <person name="Wu D."/>
            <person name="Yu G."/>
            <person name="Fraser C.M."/>
            <person name="Venter J.C."/>
            <person name="Davis R.W."/>
        </authorList>
    </citation>
    <scope>NUCLEOTIDE SEQUENCE [LARGE SCALE GENOMIC DNA]</scope>
    <source>
        <strain>cv. Columbia</strain>
    </source>
</reference>
<reference key="2">
    <citation type="journal article" date="2017" name="Plant J.">
        <title>Araport11: a complete reannotation of the Arabidopsis thaliana reference genome.</title>
        <authorList>
            <person name="Cheng C.Y."/>
            <person name="Krishnakumar V."/>
            <person name="Chan A.P."/>
            <person name="Thibaud-Nissen F."/>
            <person name="Schobel S."/>
            <person name="Town C.D."/>
        </authorList>
    </citation>
    <scope>GENOME REANNOTATION</scope>
    <source>
        <strain>cv. Columbia</strain>
    </source>
</reference>
<keyword id="KW-0067">ATP-binding</keyword>
<keyword id="KW-0119">Carbohydrate metabolism</keyword>
<keyword id="KW-0418">Kinase</keyword>
<keyword id="KW-0547">Nucleotide-binding</keyword>
<keyword id="KW-1185">Reference proteome</keyword>
<keyword id="KW-0808">Transferase</keyword>
<comment type="function">
    <text evidence="1">May play an important role in maintaining the flux of carbon towards starch formation.</text>
</comment>
<comment type="catalytic activity">
    <reaction>
        <text>D-fructose + ATP = D-fructose 6-phosphate + ADP + H(+)</text>
        <dbReference type="Rhea" id="RHEA:16125"/>
        <dbReference type="ChEBI" id="CHEBI:15378"/>
        <dbReference type="ChEBI" id="CHEBI:30616"/>
        <dbReference type="ChEBI" id="CHEBI:37721"/>
        <dbReference type="ChEBI" id="CHEBI:61527"/>
        <dbReference type="ChEBI" id="CHEBI:456216"/>
        <dbReference type="EC" id="2.7.1.4"/>
    </reaction>
</comment>
<comment type="pathway">
    <text>Glycan biosynthesis; starch biosynthesis.</text>
</comment>
<comment type="similarity">
    <text evidence="2">Belongs to the carbohydrate kinase PfkB family.</text>
</comment>
<comment type="caution">
    <text evidence="2">Could be the product of a pseudogene.</text>
</comment>
<comment type="sequence caution" evidence="2">
    <conflict type="erroneous gene model prediction">
        <sequence resource="EMBL-CDS" id="AAD50037"/>
    </conflict>
</comment>
<comment type="sequence caution" evidence="2">
    <conflict type="erroneous termination">
        <sequence resource="EMBL-CDS" id="AAD50037"/>
    </conflict>
    <text>Truncated C-terminus.</text>
</comment>
<comment type="sequence caution" evidence="2">
    <conflict type="erroneous gene model prediction">
        <sequence resource="EMBL-CDS" id="AEE32543"/>
    </conflict>
</comment>
<comment type="sequence caution" evidence="2">
    <conflict type="erroneous termination">
        <sequence resource="EMBL-CDS" id="AEE32543"/>
    </conflict>
    <text>Truncated C-terminus.</text>
</comment>
<name>SCRK8_ARATH</name>
<accession>Q9SX54</accession>
<sequence length="210" mass="23467">MILKSQANKLKFTKQAKVFHYGSISLITEPCRSAHMKATEEAKEAGALLSYDPNLREPLWPSPEEARTQIMSIWDKADIIKVSDVELEFLTRNKTIDDETAMSLWHPNLKLLLVTLGEKGCRYYTKDFHGSVETFHVDAVDTTGAGDSFVGALLNQIVDDQSVLEEEERLRKVLRIANACGAITTTKKGAIPALPTDCEALSFLKRQVEQ</sequence>
<evidence type="ECO:0000250" key="1">
    <source>
        <dbReference type="UniProtKB" id="Q6XZ79"/>
    </source>
</evidence>
<evidence type="ECO:0000305" key="2"/>
<evidence type="ECO:0000312" key="3">
    <source>
        <dbReference type="Araport" id="AT1G50390"/>
    </source>
</evidence>
<evidence type="ECO:0000312" key="4">
    <source>
        <dbReference type="EMBL" id="AAD50037.1"/>
    </source>
</evidence>
<feature type="chain" id="PRO_0000430868" description="Putative fructokinase-8">
    <location>
        <begin position="1"/>
        <end position="210"/>
    </location>
</feature>
<protein>
    <recommendedName>
        <fullName>Putative fructokinase-8</fullName>
        <ecNumber>2.7.1.4</ecNumber>
    </recommendedName>
</protein>